<accession>Q72YI4</accession>
<dbReference type="EC" id="5.3.1.9" evidence="1"/>
<dbReference type="EMBL" id="AE017194">
    <property type="protein sequence ID" value="AAS43938.1"/>
    <property type="molecule type" value="Genomic_DNA"/>
</dbReference>
<dbReference type="SMR" id="Q72YI4"/>
<dbReference type="KEGG" id="bca:BCE_5037"/>
<dbReference type="HOGENOM" id="CLU_037303_0_1_9"/>
<dbReference type="UniPathway" id="UPA00109">
    <property type="reaction ID" value="UER00181"/>
</dbReference>
<dbReference type="UniPathway" id="UPA00138"/>
<dbReference type="Proteomes" id="UP000002527">
    <property type="component" value="Chromosome"/>
</dbReference>
<dbReference type="GO" id="GO:0005829">
    <property type="term" value="C:cytosol"/>
    <property type="evidence" value="ECO:0007669"/>
    <property type="project" value="TreeGrafter"/>
</dbReference>
<dbReference type="GO" id="GO:0097367">
    <property type="term" value="F:carbohydrate derivative binding"/>
    <property type="evidence" value="ECO:0007669"/>
    <property type="project" value="InterPro"/>
</dbReference>
<dbReference type="GO" id="GO:0004347">
    <property type="term" value="F:glucose-6-phosphate isomerase activity"/>
    <property type="evidence" value="ECO:0007669"/>
    <property type="project" value="UniProtKB-UniRule"/>
</dbReference>
<dbReference type="GO" id="GO:0048029">
    <property type="term" value="F:monosaccharide binding"/>
    <property type="evidence" value="ECO:0007669"/>
    <property type="project" value="TreeGrafter"/>
</dbReference>
<dbReference type="GO" id="GO:0006094">
    <property type="term" value="P:gluconeogenesis"/>
    <property type="evidence" value="ECO:0007669"/>
    <property type="project" value="UniProtKB-UniRule"/>
</dbReference>
<dbReference type="GO" id="GO:0051156">
    <property type="term" value="P:glucose 6-phosphate metabolic process"/>
    <property type="evidence" value="ECO:0007669"/>
    <property type="project" value="TreeGrafter"/>
</dbReference>
<dbReference type="GO" id="GO:0006096">
    <property type="term" value="P:glycolytic process"/>
    <property type="evidence" value="ECO:0007669"/>
    <property type="project" value="UniProtKB-UniRule"/>
</dbReference>
<dbReference type="CDD" id="cd05015">
    <property type="entry name" value="SIS_PGI_1"/>
    <property type="match status" value="1"/>
</dbReference>
<dbReference type="CDD" id="cd05016">
    <property type="entry name" value="SIS_PGI_2"/>
    <property type="match status" value="1"/>
</dbReference>
<dbReference type="FunFam" id="3.40.50.10490:FF:000015">
    <property type="entry name" value="Glucose-6-phosphate isomerase"/>
    <property type="match status" value="1"/>
</dbReference>
<dbReference type="FunFam" id="3.40.50.10490:FF:000016">
    <property type="entry name" value="Glucose-6-phosphate isomerase"/>
    <property type="match status" value="1"/>
</dbReference>
<dbReference type="FunFam" id="3.40.50.10490:FF:000020">
    <property type="entry name" value="Glucose-6-phosphate isomerase"/>
    <property type="match status" value="1"/>
</dbReference>
<dbReference type="Gene3D" id="3.40.50.10490">
    <property type="entry name" value="Glucose-6-phosphate isomerase like protein, domain 1"/>
    <property type="match status" value="3"/>
</dbReference>
<dbReference type="HAMAP" id="MF_00473">
    <property type="entry name" value="G6P_isomerase"/>
    <property type="match status" value="1"/>
</dbReference>
<dbReference type="InterPro" id="IPR001672">
    <property type="entry name" value="G6P_Isomerase"/>
</dbReference>
<dbReference type="InterPro" id="IPR018189">
    <property type="entry name" value="Phosphoglucose_isomerase_CS"/>
</dbReference>
<dbReference type="InterPro" id="IPR046348">
    <property type="entry name" value="SIS_dom_sf"/>
</dbReference>
<dbReference type="InterPro" id="IPR035476">
    <property type="entry name" value="SIS_PGI_1"/>
</dbReference>
<dbReference type="InterPro" id="IPR035482">
    <property type="entry name" value="SIS_PGI_2"/>
</dbReference>
<dbReference type="NCBIfam" id="NF010697">
    <property type="entry name" value="PRK14097.1"/>
    <property type="match status" value="1"/>
</dbReference>
<dbReference type="PANTHER" id="PTHR11469">
    <property type="entry name" value="GLUCOSE-6-PHOSPHATE ISOMERASE"/>
    <property type="match status" value="1"/>
</dbReference>
<dbReference type="PANTHER" id="PTHR11469:SF1">
    <property type="entry name" value="GLUCOSE-6-PHOSPHATE ISOMERASE"/>
    <property type="match status" value="1"/>
</dbReference>
<dbReference type="Pfam" id="PF00342">
    <property type="entry name" value="PGI"/>
    <property type="match status" value="1"/>
</dbReference>
<dbReference type="PRINTS" id="PR00662">
    <property type="entry name" value="G6PISOMERASE"/>
</dbReference>
<dbReference type="SUPFAM" id="SSF53697">
    <property type="entry name" value="SIS domain"/>
    <property type="match status" value="1"/>
</dbReference>
<dbReference type="PROSITE" id="PS00765">
    <property type="entry name" value="P_GLUCOSE_ISOMERASE_1"/>
    <property type="match status" value="1"/>
</dbReference>
<dbReference type="PROSITE" id="PS00174">
    <property type="entry name" value="P_GLUCOSE_ISOMERASE_2"/>
    <property type="match status" value="1"/>
</dbReference>
<dbReference type="PROSITE" id="PS51463">
    <property type="entry name" value="P_GLUCOSE_ISOMERASE_3"/>
    <property type="match status" value="1"/>
</dbReference>
<name>G6PI_BACC1</name>
<evidence type="ECO:0000255" key="1">
    <source>
        <dbReference type="HAMAP-Rule" id="MF_00473"/>
    </source>
</evidence>
<proteinExistence type="inferred from homology"/>
<protein>
    <recommendedName>
        <fullName evidence="1">Glucose-6-phosphate isomerase</fullName>
        <shortName evidence="1">GPI</shortName>
        <ecNumber evidence="1">5.3.1.9</ecNumber>
    </recommendedName>
    <alternativeName>
        <fullName evidence="1">Phosphoglucose isomerase</fullName>
        <shortName evidence="1">PGI</shortName>
    </alternativeName>
    <alternativeName>
        <fullName evidence="1">Phosphohexose isomerase</fullName>
        <shortName evidence="1">PHI</shortName>
    </alternativeName>
</protein>
<organism>
    <name type="scientific">Bacillus cereus (strain ATCC 10987 / NRS 248)</name>
    <dbReference type="NCBI Taxonomy" id="222523"/>
    <lineage>
        <taxon>Bacteria</taxon>
        <taxon>Bacillati</taxon>
        <taxon>Bacillota</taxon>
        <taxon>Bacilli</taxon>
        <taxon>Bacillales</taxon>
        <taxon>Bacillaceae</taxon>
        <taxon>Bacillus</taxon>
        <taxon>Bacillus cereus group</taxon>
    </lineage>
</organism>
<feature type="chain" id="PRO_0000180585" description="Glucose-6-phosphate isomerase">
    <location>
        <begin position="1"/>
        <end position="450"/>
    </location>
</feature>
<feature type="active site" description="Proton donor" evidence="1">
    <location>
        <position position="291"/>
    </location>
</feature>
<feature type="active site" evidence="1">
    <location>
        <position position="312"/>
    </location>
</feature>
<feature type="active site" evidence="1">
    <location>
        <position position="426"/>
    </location>
</feature>
<feature type="modified residue" description="Phosphothreonine" evidence="1">
    <location>
        <position position="39"/>
    </location>
</feature>
<keyword id="KW-0963">Cytoplasm</keyword>
<keyword id="KW-0312">Gluconeogenesis</keyword>
<keyword id="KW-0324">Glycolysis</keyword>
<keyword id="KW-0413">Isomerase</keyword>
<keyword id="KW-0597">Phosphoprotein</keyword>
<gene>
    <name evidence="1" type="primary">pgi</name>
    <name type="ordered locus">BCE_5037</name>
</gene>
<sequence length="450" mass="50322">MSTHVTFDYSKALSFIGEHEITYLRDAVKVTHHAIHEKTGAGNDFLGWVDLPLQYDKEEFARIQKCAEKIKNDSDILLVVGIGGSYLGARAAIEMLNHSFYNTLSKEQRKTPQVLFVGQNISSTYMKDLMDVLEGKDFSINVISKSGTTTEPALAFRIFRKLLEEKYGKEEARKRIYATTDKARGALKTLADNEGYETFVIPDDVGGRFSVLTPVGLLPIAVSGLNIEEMMKGAAAGHDDFGTSELEENPAYQYAVVRNALYNKGKTIEMLVNYEPALQYFAEWWKQLFGESEGKDQKGIFPSSANFSTDLHSLGQYVQEGRRDLFETVLKVGKPTHELTIESEENDLDGLNYLAGETVDFVNTKAYEGTLLAHSDGGVPNLIVNIPELNEYTFGYLVYFFEKACAMSGYLLGVNPFDQPGVEAYKKNMFALLGKPGFEELKAELEERLK</sequence>
<reference key="1">
    <citation type="journal article" date="2004" name="Nucleic Acids Res.">
        <title>The genome sequence of Bacillus cereus ATCC 10987 reveals metabolic adaptations and a large plasmid related to Bacillus anthracis pXO1.</title>
        <authorList>
            <person name="Rasko D.A."/>
            <person name="Ravel J."/>
            <person name="Oekstad O.A."/>
            <person name="Helgason E."/>
            <person name="Cer R.Z."/>
            <person name="Jiang L."/>
            <person name="Shores K.A."/>
            <person name="Fouts D.E."/>
            <person name="Tourasse N.J."/>
            <person name="Angiuoli S.V."/>
            <person name="Kolonay J.F."/>
            <person name="Nelson W.C."/>
            <person name="Kolstoe A.-B."/>
            <person name="Fraser C.M."/>
            <person name="Read T.D."/>
        </authorList>
    </citation>
    <scope>NUCLEOTIDE SEQUENCE [LARGE SCALE GENOMIC DNA]</scope>
    <source>
        <strain>ATCC 10987 / NRS 248</strain>
    </source>
</reference>
<comment type="function">
    <text evidence="1">Catalyzes the reversible isomerization of glucose-6-phosphate to fructose-6-phosphate.</text>
</comment>
<comment type="catalytic activity">
    <reaction evidence="1">
        <text>alpha-D-glucose 6-phosphate = beta-D-fructose 6-phosphate</text>
        <dbReference type="Rhea" id="RHEA:11816"/>
        <dbReference type="ChEBI" id="CHEBI:57634"/>
        <dbReference type="ChEBI" id="CHEBI:58225"/>
        <dbReference type="EC" id="5.3.1.9"/>
    </reaction>
</comment>
<comment type="pathway">
    <text evidence="1">Carbohydrate biosynthesis; gluconeogenesis.</text>
</comment>
<comment type="pathway">
    <text evidence="1">Carbohydrate degradation; glycolysis; D-glyceraldehyde 3-phosphate and glycerone phosphate from D-glucose: step 2/4.</text>
</comment>
<comment type="subcellular location">
    <subcellularLocation>
        <location evidence="1">Cytoplasm</location>
    </subcellularLocation>
</comment>
<comment type="similarity">
    <text evidence="1">Belongs to the GPI family.</text>
</comment>